<keyword id="KW-1003">Cell membrane</keyword>
<keyword id="KW-0143">Chaperone</keyword>
<keyword id="KW-0903">Direct protein sequencing</keyword>
<keyword id="KW-1015">Disulfide bond</keyword>
<keyword id="KW-0256">Endoplasmic reticulum</keyword>
<keyword id="KW-0413">Isomerase</keyword>
<keyword id="KW-0472">Membrane</keyword>
<keyword id="KW-0676">Redox-active center</keyword>
<keyword id="KW-1185">Reference proteome</keyword>
<keyword id="KW-0677">Repeat</keyword>
<keyword id="KW-0732">Signal</keyword>
<accession>P09102</accession>
<accession>Q90969</accession>
<evidence type="ECO:0000250" key="1"/>
<evidence type="ECO:0000250" key="2">
    <source>
        <dbReference type="UniProtKB" id="P07237"/>
    </source>
</evidence>
<evidence type="ECO:0000255" key="3">
    <source>
        <dbReference type="PROSITE-ProRule" id="PRU00691"/>
    </source>
</evidence>
<evidence type="ECO:0000256" key="4">
    <source>
        <dbReference type="SAM" id="MobiDB-lite"/>
    </source>
</evidence>
<evidence type="ECO:0000269" key="5">
    <source>
    </source>
</evidence>
<evidence type="ECO:0000305" key="6"/>
<feature type="signal peptide" evidence="5">
    <location>
        <begin position="1"/>
        <end position="22"/>
    </location>
</feature>
<feature type="chain" id="PRO_0000034200" description="Protein disulfide-isomerase" evidence="5">
    <location>
        <begin position="23"/>
        <end position="515"/>
    </location>
</feature>
<feature type="domain" description="Thioredoxin 1" evidence="3">
    <location>
        <begin position="23"/>
        <end position="139"/>
    </location>
</feature>
<feature type="domain" description="Thioredoxin 2" evidence="3">
    <location>
        <begin position="351"/>
        <end position="480"/>
    </location>
</feature>
<feature type="region of interest" description="Disordered" evidence="4">
    <location>
        <begin position="477"/>
        <end position="515"/>
    </location>
</feature>
<feature type="short sequence motif" description="Prevents secretion from ER">
    <location>
        <begin position="512"/>
        <end position="515"/>
    </location>
</feature>
<feature type="compositionally biased region" description="Acidic residues" evidence="4">
    <location>
        <begin position="484"/>
        <end position="507"/>
    </location>
</feature>
<feature type="active site" description="Nucleophile" evidence="1">
    <location>
        <position position="58"/>
    </location>
</feature>
<feature type="active site" description="Nucleophile" evidence="1">
    <location>
        <position position="61"/>
    </location>
</feature>
<feature type="active site" description="Nucleophile" evidence="1">
    <location>
        <position position="402"/>
    </location>
</feature>
<feature type="active site" description="Nucleophile" evidence="1">
    <location>
        <position position="405"/>
    </location>
</feature>
<feature type="site" description="Contributes to redox potential value" evidence="1">
    <location>
        <position position="59"/>
    </location>
</feature>
<feature type="site" description="Contributes to redox potential value" evidence="1">
    <location>
        <position position="60"/>
    </location>
</feature>
<feature type="site" description="Lowers pKa of C-terminal Cys of first active site" evidence="1">
    <location>
        <position position="125"/>
    </location>
</feature>
<feature type="site" description="Contributes to redox potential value" evidence="1">
    <location>
        <position position="403"/>
    </location>
</feature>
<feature type="site" description="Contributes to redox potential value" evidence="1">
    <location>
        <position position="404"/>
    </location>
</feature>
<feature type="site" description="Lowers pKa of C-terminal Cys of second active site" evidence="1">
    <location>
        <position position="466"/>
    </location>
</feature>
<feature type="disulfide bond" description="Redox-active" evidence="3">
    <location>
        <begin position="58"/>
        <end position="61"/>
    </location>
</feature>
<feature type="disulfide bond" description="Redox-active" evidence="3">
    <location>
        <begin position="402"/>
        <end position="405"/>
    </location>
</feature>
<feature type="sequence conflict" description="In Ref. 1 and 3." evidence="6" ref="1 3">
    <original>E</original>
    <variation>Q</variation>
    <location>
        <position position="23"/>
    </location>
</feature>
<feature type="sequence conflict" description="In Ref. 3." evidence="6" ref="3">
    <original>EL</original>
    <variation>DV</variation>
    <location>
        <begin position="94"/>
        <end position="95"/>
    </location>
</feature>
<feature type="sequence conflict" description="In Ref. 3." evidence="6" ref="3">
    <original>H</original>
    <variation>Q</variation>
    <location>
        <position position="359"/>
    </location>
</feature>
<feature type="sequence conflict" description="In Ref. 5; CAB57801." evidence="6" ref="5">
    <original>T</original>
    <variation>M</variation>
    <location>
        <position position="447"/>
    </location>
</feature>
<protein>
    <recommendedName>
        <fullName>Protein disulfide-isomerase</fullName>
        <shortName>PDI</shortName>
        <ecNumber>5.3.4.1</ecNumber>
    </recommendedName>
    <alternativeName>
        <fullName>Cellular thyroid hormone-binding protein</fullName>
    </alternativeName>
    <alternativeName>
        <fullName>Prolyl 4-hydroxylase subunit beta</fullName>
    </alternativeName>
    <alternativeName>
        <fullName>Retina cognin</fullName>
        <shortName>R-cognin</shortName>
    </alternativeName>
</protein>
<reference key="1">
    <citation type="submission" date="2001-06" db="EMBL/GenBank/DDBJ databases">
        <authorList>
            <person name="Hausman R.E."/>
        </authorList>
    </citation>
    <scope>NUCLEOTIDE SEQUENCE [MRNA]</scope>
    <scope>SEQUENCE REVISION TO 315; 356; 488; 491-493 AND 497</scope>
</reference>
<reference key="2">
    <citation type="journal article" date="1993" name="Proc. Natl. Acad. Sci. U.S.A.">
        <title>cDNA for R-cognin: homology with a multifunctional protein.</title>
        <authorList>
            <person name="Krishna Rao A.S."/>
            <person name="Hausman R.E."/>
        </authorList>
    </citation>
    <scope>NUCLEOTIDE SEQUENCE [MRNA] OF 139-515</scope>
    <source>
        <tissue>Retina</tissue>
    </source>
</reference>
<reference key="3">
    <citation type="journal article" date="1988" name="Gene">
        <title>Structure of the gene encoding the beta-subunit of chicken prolyl 4-hydroxylase.</title>
        <authorList>
            <person name="Nakazawa M."/>
            <person name="Aida T."/>
            <person name="Everson W.V."/>
            <person name="Gonda M.A."/>
            <person name="Hughes S.H."/>
            <person name="Kao W.W."/>
        </authorList>
    </citation>
    <scope>NUCLEOTIDE SEQUENCE OF 1-129; 163-172; 209-218; 244-253; 286-295; 353-463 AND 483-515</scope>
</reference>
<reference key="4">
    <citation type="journal article" date="1988" name="Biochem. J.">
        <title>Molecular cloning of a multifunctional chicken protein acting as the prolyl 4-hydroxylase beta-subunit, protein disulphide-isomerase and a cellular thyroid-hormone-binding protein. Comparison of cDNA-deduced amino acid sequences with those in other species.</title>
        <authorList>
            <person name="Parkkonen T."/>
            <person name="Kivirikko K.Z."/>
            <person name="Pihlajaniemi T."/>
        </authorList>
    </citation>
    <scope>NUCLEOTIDE SEQUENCE [MRNA] OF 26-515</scope>
    <scope>PROTEIN SEQUENCE OF 23-31 AND 95-109</scope>
</reference>
<reference key="5">
    <citation type="submission" date="1988-02" db="EMBL/GenBank/DDBJ databases">
        <authorList>
            <person name="Bassuk J.A."/>
        </authorList>
    </citation>
    <scope>NUCLEOTIDE SEQUENCE [GENOMIC DNA] OF 399-459</scope>
</reference>
<proteinExistence type="evidence at protein level"/>
<sequence length="515" mass="57410">MAVVRVRAIVALLCLVAALGLAEPLEEEDGVLVLRAANFEQALAAHRHLLVEFYAPWCGHCKALAPEYAKAAAQLKAEGSEIRLAKVDATEEAELAQQFGVRGYPTIKFFRNGDKAAPREYTAGREADDIVSWLKKRTGPAATTLTDAAAAETLVDSSEVVVIGFFKDVTSDAAKEFLLAAESVDDIPFGISSSADVFSKYQLSQDGVVLFKKFDEGRNNFEGDLTKDNLLNFIKSNQLPLVIEFTEQTAPKIFGGEIKTHILLFLPKSVSDYEGKLDNFKTAAGNFKGKILFIFIDSDHSDNQRILEFFGLKKEECPAVRLITLEEEMTKYKPESDDLTADKIKEFCNKFLEGKIKPHLMSQDLPEDWDKQPVKVLVGKNFEEVAFDENKNVFVEFYAPWCGHCKQLAPIWDKLGETYRDHENIVIAKMDSTANEVEAVKIHSFPTLKFFPAGSGRNVIDYNGERTLEGFKKFLESGGQDGAAADDDLEDLETDEETDLEEGDDDEQKIQKDEL</sequence>
<gene>
    <name type="primary">P4HB</name>
    <name type="synonym">PDI</name>
    <name type="synonym">PDIA1</name>
</gene>
<dbReference type="EC" id="5.3.4.1"/>
<dbReference type="EMBL" id="L11147">
    <property type="protein sequence ID" value="AAA49054.2"/>
    <property type="status" value="ALT_INIT"/>
    <property type="molecule type" value="mRNA"/>
</dbReference>
<dbReference type="EMBL" id="X13110">
    <property type="protein sequence ID" value="CAA31502.1"/>
    <property type="molecule type" value="mRNA"/>
</dbReference>
<dbReference type="EMBL" id="X06768">
    <property type="protein sequence ID" value="CAB57801.1"/>
    <property type="molecule type" value="Genomic_DNA"/>
</dbReference>
<dbReference type="PIR" id="S02084">
    <property type="entry name" value="ISCHSS"/>
</dbReference>
<dbReference type="SMR" id="P09102"/>
<dbReference type="FunCoup" id="P09102">
    <property type="interactions" value="2213"/>
</dbReference>
<dbReference type="STRING" id="9031.ENSGALP00000064334"/>
<dbReference type="PaxDb" id="9031-ENSGALP00000011689"/>
<dbReference type="VEuPathDB" id="HostDB:geneid_374091"/>
<dbReference type="eggNOG" id="KOG0190">
    <property type="taxonomic scope" value="Eukaryota"/>
</dbReference>
<dbReference type="InParanoid" id="P09102"/>
<dbReference type="OrthoDB" id="72053at2759"/>
<dbReference type="PhylomeDB" id="P09102"/>
<dbReference type="SABIO-RK" id="P09102"/>
<dbReference type="Proteomes" id="UP000000539">
    <property type="component" value="Unassembled WGS sequence"/>
</dbReference>
<dbReference type="GO" id="GO:0005783">
    <property type="term" value="C:endoplasmic reticulum"/>
    <property type="evidence" value="ECO:0000250"/>
    <property type="project" value="UniProtKB"/>
</dbReference>
<dbReference type="GO" id="GO:0005788">
    <property type="term" value="C:endoplasmic reticulum lumen"/>
    <property type="evidence" value="ECO:0007669"/>
    <property type="project" value="UniProtKB-SubCell"/>
</dbReference>
<dbReference type="GO" id="GO:0009897">
    <property type="term" value="C:external side of plasma membrane"/>
    <property type="evidence" value="ECO:0000318"/>
    <property type="project" value="GO_Central"/>
</dbReference>
<dbReference type="GO" id="GO:0003756">
    <property type="term" value="F:protein disulfide isomerase activity"/>
    <property type="evidence" value="ECO:0000318"/>
    <property type="project" value="GO_Central"/>
</dbReference>
<dbReference type="GO" id="GO:0006457">
    <property type="term" value="P:protein folding"/>
    <property type="evidence" value="ECO:0000318"/>
    <property type="project" value="GO_Central"/>
</dbReference>
<dbReference type="GO" id="GO:0034976">
    <property type="term" value="P:response to endoplasmic reticulum stress"/>
    <property type="evidence" value="ECO:0000318"/>
    <property type="project" value="GO_Central"/>
</dbReference>
<dbReference type="CDD" id="cd02961">
    <property type="entry name" value="PDI_a_family"/>
    <property type="match status" value="1"/>
</dbReference>
<dbReference type="CDD" id="cd02995">
    <property type="entry name" value="PDI_a_PDI_a'_C"/>
    <property type="match status" value="1"/>
</dbReference>
<dbReference type="CDD" id="cd02982">
    <property type="entry name" value="PDI_b'_family"/>
    <property type="match status" value="1"/>
</dbReference>
<dbReference type="CDD" id="cd02981">
    <property type="entry name" value="PDI_b_family"/>
    <property type="match status" value="1"/>
</dbReference>
<dbReference type="FunFam" id="3.40.30.10:FF:000023">
    <property type="entry name" value="Protein disulfide-isomerase"/>
    <property type="match status" value="1"/>
</dbReference>
<dbReference type="FunFam" id="3.40.30.10:FF:000030">
    <property type="entry name" value="Protein disulfide-isomerase"/>
    <property type="match status" value="1"/>
</dbReference>
<dbReference type="FunFam" id="3.40.30.10:FF:000110">
    <property type="entry name" value="Protein disulfide-isomerase"/>
    <property type="match status" value="1"/>
</dbReference>
<dbReference type="FunFam" id="3.40.30.10:FF:000027">
    <property type="entry name" value="protein disulfide-isomerase A2"/>
    <property type="match status" value="1"/>
</dbReference>
<dbReference type="Gene3D" id="3.40.30.10">
    <property type="entry name" value="Glutaredoxin"/>
    <property type="match status" value="4"/>
</dbReference>
<dbReference type="InterPro" id="IPR005788">
    <property type="entry name" value="PDI_thioredoxin-like_dom"/>
</dbReference>
<dbReference type="InterPro" id="IPR005792">
    <property type="entry name" value="Prot_disulphide_isomerase"/>
</dbReference>
<dbReference type="InterPro" id="IPR036249">
    <property type="entry name" value="Thioredoxin-like_sf"/>
</dbReference>
<dbReference type="InterPro" id="IPR017937">
    <property type="entry name" value="Thioredoxin_CS"/>
</dbReference>
<dbReference type="InterPro" id="IPR013766">
    <property type="entry name" value="Thioredoxin_domain"/>
</dbReference>
<dbReference type="NCBIfam" id="TIGR01130">
    <property type="entry name" value="ER_PDI_fam"/>
    <property type="match status" value="1"/>
</dbReference>
<dbReference type="NCBIfam" id="TIGR01126">
    <property type="entry name" value="pdi_dom"/>
    <property type="match status" value="2"/>
</dbReference>
<dbReference type="PANTHER" id="PTHR18929">
    <property type="entry name" value="PROTEIN DISULFIDE ISOMERASE"/>
    <property type="match status" value="1"/>
</dbReference>
<dbReference type="PANTHER" id="PTHR18929:SF101">
    <property type="entry name" value="PROTEIN DISULFIDE-ISOMERASE"/>
    <property type="match status" value="1"/>
</dbReference>
<dbReference type="Pfam" id="PF00085">
    <property type="entry name" value="Thioredoxin"/>
    <property type="match status" value="2"/>
</dbReference>
<dbReference type="Pfam" id="PF13848">
    <property type="entry name" value="Thioredoxin_6"/>
    <property type="match status" value="1"/>
</dbReference>
<dbReference type="PRINTS" id="PR00421">
    <property type="entry name" value="THIOREDOXIN"/>
</dbReference>
<dbReference type="SUPFAM" id="SSF52833">
    <property type="entry name" value="Thioredoxin-like"/>
    <property type="match status" value="4"/>
</dbReference>
<dbReference type="PROSITE" id="PS00014">
    <property type="entry name" value="ER_TARGET"/>
    <property type="match status" value="1"/>
</dbReference>
<dbReference type="PROSITE" id="PS00194">
    <property type="entry name" value="THIOREDOXIN_1"/>
    <property type="match status" value="2"/>
</dbReference>
<dbReference type="PROSITE" id="PS51352">
    <property type="entry name" value="THIOREDOXIN_2"/>
    <property type="match status" value="2"/>
</dbReference>
<name>PDIA1_CHICK</name>
<organism>
    <name type="scientific">Gallus gallus</name>
    <name type="common">Chicken</name>
    <dbReference type="NCBI Taxonomy" id="9031"/>
    <lineage>
        <taxon>Eukaryota</taxon>
        <taxon>Metazoa</taxon>
        <taxon>Chordata</taxon>
        <taxon>Craniata</taxon>
        <taxon>Vertebrata</taxon>
        <taxon>Euteleostomi</taxon>
        <taxon>Archelosauria</taxon>
        <taxon>Archosauria</taxon>
        <taxon>Dinosauria</taxon>
        <taxon>Saurischia</taxon>
        <taxon>Theropoda</taxon>
        <taxon>Coelurosauria</taxon>
        <taxon>Aves</taxon>
        <taxon>Neognathae</taxon>
        <taxon>Galloanserae</taxon>
        <taxon>Galliformes</taxon>
        <taxon>Phasianidae</taxon>
        <taxon>Phasianinae</taxon>
        <taxon>Gallus</taxon>
    </lineage>
</organism>
<comment type="function">
    <text evidence="1">This multifunctional protein catalyzes the formation, breakage and rearrangement of disulfide bonds. At the cell surface, seems to act as a reductase that cleaves disulfide bonds of proteins attached to the cell. May therefore cause structural modifications of exofacial proteins. Inside the cell, seems to form/rearrange disulfide bonds of nascent proteins. At high concentrations, functions as a chaperone that inhibits aggregation of misfolded proteins. At low concentrations, facilitates aggregation (anti-chaperone activity). Also acts a structural subunit of various enzymes such as prolyl 4-hydroxylase (By similarity).</text>
</comment>
<comment type="catalytic activity">
    <reaction>
        <text>Catalyzes the rearrangement of -S-S- bonds in proteins.</text>
        <dbReference type="EC" id="5.3.4.1"/>
    </reaction>
</comment>
<comment type="subunit">
    <text evidence="1 2">Heterodimer; heterodimerizes with the protein microsomal triglyceride transfer MTTP. Homodimer. Monomers and homotetramers may also occur. Also constitutes the structural subunit of prolyl 4-hydroxylase. Stabilizes this enzyme and retains it in the ER without contributing to the catalytic activity. Binds UBQLN1 (By similarity).</text>
</comment>
<comment type="subcellular location">
    <subcellularLocation>
        <location evidence="2">Endoplasmic reticulum</location>
    </subcellularLocation>
    <subcellularLocation>
        <location evidence="2">Endoplasmic reticulum lumen</location>
    </subcellularLocation>
    <subcellularLocation>
        <location evidence="6">Cell membrane</location>
        <topology evidence="6">Peripheral membrane protein</topology>
    </subcellularLocation>
</comment>
<comment type="similarity">
    <text evidence="6">Belongs to the protein disulfide isomerase family.</text>
</comment>
<comment type="sequence caution" evidence="6">
    <conflict type="erroneous initiation">
        <sequence resource="EMBL-CDS" id="AAA49054"/>
    </conflict>
</comment>